<keyword id="KW-0066">ATP synthesis</keyword>
<keyword id="KW-1003">Cell membrane</keyword>
<keyword id="KW-0139">CF(1)</keyword>
<keyword id="KW-0375">Hydrogen ion transport</keyword>
<keyword id="KW-0406">Ion transport</keyword>
<keyword id="KW-0472">Membrane</keyword>
<keyword id="KW-0813">Transport</keyword>
<feature type="chain" id="PRO_0000073333" description="ATP synthase gamma chain">
    <location>
        <begin position="1"/>
        <end position="303"/>
    </location>
</feature>
<proteinExistence type="inferred from homology"/>
<dbReference type="EMBL" id="AJ430065">
    <property type="protein sequence ID" value="CAD22546.1"/>
    <property type="molecule type" value="Genomic_DNA"/>
</dbReference>
<dbReference type="RefSeq" id="WP_002818533.1">
    <property type="nucleotide sequence ID" value="NZ_QYTB01000010.1"/>
</dbReference>
<dbReference type="SMR" id="Q8KM29"/>
<dbReference type="GeneID" id="75066259"/>
<dbReference type="PATRIC" id="fig|1247.145.peg.1736"/>
<dbReference type="OMA" id="MQITSAM"/>
<dbReference type="GO" id="GO:0005886">
    <property type="term" value="C:plasma membrane"/>
    <property type="evidence" value="ECO:0007669"/>
    <property type="project" value="UniProtKB-SubCell"/>
</dbReference>
<dbReference type="GO" id="GO:0045259">
    <property type="term" value="C:proton-transporting ATP synthase complex"/>
    <property type="evidence" value="ECO:0007669"/>
    <property type="project" value="UniProtKB-KW"/>
</dbReference>
<dbReference type="GO" id="GO:0005524">
    <property type="term" value="F:ATP binding"/>
    <property type="evidence" value="ECO:0007669"/>
    <property type="project" value="UniProtKB-UniRule"/>
</dbReference>
<dbReference type="GO" id="GO:0046933">
    <property type="term" value="F:proton-transporting ATP synthase activity, rotational mechanism"/>
    <property type="evidence" value="ECO:0007669"/>
    <property type="project" value="UniProtKB-UniRule"/>
</dbReference>
<dbReference type="GO" id="GO:0042777">
    <property type="term" value="P:proton motive force-driven plasma membrane ATP synthesis"/>
    <property type="evidence" value="ECO:0007669"/>
    <property type="project" value="UniProtKB-UniRule"/>
</dbReference>
<dbReference type="CDD" id="cd12151">
    <property type="entry name" value="F1-ATPase_gamma"/>
    <property type="match status" value="1"/>
</dbReference>
<dbReference type="Gene3D" id="3.40.1380.10">
    <property type="match status" value="1"/>
</dbReference>
<dbReference type="Gene3D" id="1.10.287.80">
    <property type="entry name" value="ATP synthase, gamma subunit, helix hairpin domain"/>
    <property type="match status" value="2"/>
</dbReference>
<dbReference type="HAMAP" id="MF_00815">
    <property type="entry name" value="ATP_synth_gamma_bact"/>
    <property type="match status" value="1"/>
</dbReference>
<dbReference type="InterPro" id="IPR035968">
    <property type="entry name" value="ATP_synth_F1_ATPase_gsu"/>
</dbReference>
<dbReference type="InterPro" id="IPR000131">
    <property type="entry name" value="ATP_synth_F1_gsu"/>
</dbReference>
<dbReference type="NCBIfam" id="TIGR01146">
    <property type="entry name" value="ATPsyn_F1gamma"/>
    <property type="match status" value="1"/>
</dbReference>
<dbReference type="PANTHER" id="PTHR11693">
    <property type="entry name" value="ATP SYNTHASE GAMMA CHAIN"/>
    <property type="match status" value="1"/>
</dbReference>
<dbReference type="PANTHER" id="PTHR11693:SF22">
    <property type="entry name" value="ATP SYNTHASE SUBUNIT GAMMA, MITOCHONDRIAL"/>
    <property type="match status" value="1"/>
</dbReference>
<dbReference type="Pfam" id="PF00231">
    <property type="entry name" value="ATP-synt"/>
    <property type="match status" value="1"/>
</dbReference>
<dbReference type="PRINTS" id="PR00126">
    <property type="entry name" value="ATPASEGAMMA"/>
</dbReference>
<dbReference type="SUPFAM" id="SSF52943">
    <property type="entry name" value="ATP synthase (F1-ATPase), gamma subunit"/>
    <property type="match status" value="1"/>
</dbReference>
<reference key="1">
    <citation type="journal article" date="2003" name="Syst. Appl. Microbiol.">
        <title>Cloning, sequence analysis and expression of the F1F0-ATPase beta-subunit from wine lactic acid bacteria.</title>
        <authorList>
            <person name="Sievers M."/>
            <person name="Uermoesi C."/>
            <person name="Fehlmann M."/>
            <person name="Krieger S."/>
        </authorList>
    </citation>
    <scope>NUCLEOTIDE SEQUENCE [GENOMIC DNA]</scope>
    <source>
        <strain>E656</strain>
    </source>
</reference>
<evidence type="ECO:0000255" key="1">
    <source>
        <dbReference type="HAMAP-Rule" id="MF_00815"/>
    </source>
</evidence>
<organism>
    <name type="scientific">Oenococcus oeni</name>
    <name type="common">Leuconostoc oenos</name>
    <dbReference type="NCBI Taxonomy" id="1247"/>
    <lineage>
        <taxon>Bacteria</taxon>
        <taxon>Bacillati</taxon>
        <taxon>Bacillota</taxon>
        <taxon>Bacilli</taxon>
        <taxon>Lactobacillales</taxon>
        <taxon>Lactobacillaceae</taxon>
        <taxon>Oenococcus</taxon>
    </lineage>
</organism>
<gene>
    <name evidence="1" type="primary">atpG</name>
</gene>
<sequence>MASLQDIRRRIDSTKKTSQITSAMQMVSSSKLIQIQKHTSGYLDYANHVEAIVAHLAAAHLLEHQNGSSIPFITQRPVKTTAILVITSDRGLVGGYNNQVLKRTDQIMREQKLTKENAVIFALGGKGSDYYAKRGFTIAFENRDITDVPKFWEVSDLVKEVTKQYAARKFDALELVFNHFINRLKNDVVNQQILPIRSENFQRDEKGNLTADKYKGQSSIYEFEPAPESLLKIVLPQFAQSLLYGAILDAKTAEHAASASAMRAATDNAKDLISTLELKYNRARQAAITTEITEITGGMAALQ</sequence>
<comment type="function">
    <text evidence="1">Produces ATP from ADP in the presence of a proton gradient across the membrane. The gamma chain is believed to be important in regulating ATPase activity and the flow of protons through the CF(0) complex.</text>
</comment>
<comment type="subunit">
    <text evidence="1">F-type ATPases have 2 components, CF(1) - the catalytic core - and CF(0) - the membrane proton channel. CF(1) has five subunits: alpha(3), beta(3), gamma(1), delta(1), epsilon(1). CF(0) has three main subunits: a, b and c.</text>
</comment>
<comment type="subcellular location">
    <subcellularLocation>
        <location evidence="1">Cell membrane</location>
        <topology evidence="1">Peripheral membrane protein</topology>
    </subcellularLocation>
</comment>
<comment type="similarity">
    <text evidence="1">Belongs to the ATPase gamma chain family.</text>
</comment>
<name>ATPG_OENOE</name>
<protein>
    <recommendedName>
        <fullName evidence="1">ATP synthase gamma chain</fullName>
    </recommendedName>
    <alternativeName>
        <fullName evidence="1">ATP synthase F1 sector gamma subunit</fullName>
    </alternativeName>
    <alternativeName>
        <fullName evidence="1">F-ATPase gamma subunit</fullName>
    </alternativeName>
</protein>
<accession>Q8KM29</accession>